<accession>Q5NFC6</accession>
<sequence length="160" mass="17703">MANDRVPMTPAGEQALRAELDKLKKIERPAIIEAIAEARDHGDLKENAEYHAARERQGIIEGRIKDIESKLSNAQVIDVTKIQANGMVIFGATVTIMNVDTEEETTYKIVGEDEADIDNQKISVVAPLARALIKKEEGDEITLDTPKGKVTYEIVAVEYK</sequence>
<gene>
    <name evidence="1" type="primary">greA</name>
    <name type="ordered locus">FTT_1313c</name>
</gene>
<feature type="chain" id="PRO_1000202858" description="Transcription elongation factor GreA">
    <location>
        <begin position="1"/>
        <end position="160"/>
    </location>
</feature>
<dbReference type="EMBL" id="AJ749949">
    <property type="protein sequence ID" value="CAG45946.1"/>
    <property type="molecule type" value="Genomic_DNA"/>
</dbReference>
<dbReference type="RefSeq" id="WP_003016773.1">
    <property type="nucleotide sequence ID" value="NZ_CP010290.1"/>
</dbReference>
<dbReference type="RefSeq" id="YP_170266.1">
    <property type="nucleotide sequence ID" value="NC_006570.2"/>
</dbReference>
<dbReference type="SMR" id="Q5NFC6"/>
<dbReference type="STRING" id="177416.FTT_1313c"/>
<dbReference type="DNASU" id="3191923"/>
<dbReference type="EnsemblBacteria" id="CAG45946">
    <property type="protein sequence ID" value="CAG45946"/>
    <property type="gene ID" value="FTT_1313c"/>
</dbReference>
<dbReference type="KEGG" id="ftu:FTT_1313c"/>
<dbReference type="eggNOG" id="COG0782">
    <property type="taxonomic scope" value="Bacteria"/>
</dbReference>
<dbReference type="OrthoDB" id="9808774at2"/>
<dbReference type="Proteomes" id="UP000001174">
    <property type="component" value="Chromosome"/>
</dbReference>
<dbReference type="GO" id="GO:0003677">
    <property type="term" value="F:DNA binding"/>
    <property type="evidence" value="ECO:0007669"/>
    <property type="project" value="UniProtKB-UniRule"/>
</dbReference>
<dbReference type="GO" id="GO:0070063">
    <property type="term" value="F:RNA polymerase binding"/>
    <property type="evidence" value="ECO:0007669"/>
    <property type="project" value="InterPro"/>
</dbReference>
<dbReference type="GO" id="GO:0006354">
    <property type="term" value="P:DNA-templated transcription elongation"/>
    <property type="evidence" value="ECO:0007669"/>
    <property type="project" value="TreeGrafter"/>
</dbReference>
<dbReference type="GO" id="GO:0032784">
    <property type="term" value="P:regulation of DNA-templated transcription elongation"/>
    <property type="evidence" value="ECO:0007669"/>
    <property type="project" value="UniProtKB-UniRule"/>
</dbReference>
<dbReference type="FunFam" id="1.10.287.180:FF:000001">
    <property type="entry name" value="Transcription elongation factor GreA"/>
    <property type="match status" value="1"/>
</dbReference>
<dbReference type="FunFam" id="3.10.50.30:FF:000001">
    <property type="entry name" value="Transcription elongation factor GreA"/>
    <property type="match status" value="1"/>
</dbReference>
<dbReference type="Gene3D" id="3.10.50.30">
    <property type="entry name" value="Transcription elongation factor, GreA/GreB, C-terminal domain"/>
    <property type="match status" value="1"/>
</dbReference>
<dbReference type="Gene3D" id="1.10.287.180">
    <property type="entry name" value="Transcription elongation factor, GreA/GreB, N-terminal domain"/>
    <property type="match status" value="1"/>
</dbReference>
<dbReference type="HAMAP" id="MF_00105">
    <property type="entry name" value="GreA_GreB"/>
    <property type="match status" value="1"/>
</dbReference>
<dbReference type="InterPro" id="IPR036953">
    <property type="entry name" value="GreA/GreB_C_sf"/>
</dbReference>
<dbReference type="InterPro" id="IPR018151">
    <property type="entry name" value="TF_GreA/GreB_CS"/>
</dbReference>
<dbReference type="InterPro" id="IPR006359">
    <property type="entry name" value="Tscrpt_elong_fac_GreA"/>
</dbReference>
<dbReference type="InterPro" id="IPR028624">
    <property type="entry name" value="Tscrpt_elong_fac_GreA/B"/>
</dbReference>
<dbReference type="InterPro" id="IPR001437">
    <property type="entry name" value="Tscrpt_elong_fac_GreA/B_C"/>
</dbReference>
<dbReference type="InterPro" id="IPR023459">
    <property type="entry name" value="Tscrpt_elong_fac_GreA/B_fam"/>
</dbReference>
<dbReference type="InterPro" id="IPR022691">
    <property type="entry name" value="Tscrpt_elong_fac_GreA/B_N"/>
</dbReference>
<dbReference type="InterPro" id="IPR036805">
    <property type="entry name" value="Tscrpt_elong_fac_GreA/B_N_sf"/>
</dbReference>
<dbReference type="NCBIfam" id="TIGR01462">
    <property type="entry name" value="greA"/>
    <property type="match status" value="1"/>
</dbReference>
<dbReference type="NCBIfam" id="NF001261">
    <property type="entry name" value="PRK00226.1-2"/>
    <property type="match status" value="1"/>
</dbReference>
<dbReference type="NCBIfam" id="NF001263">
    <property type="entry name" value="PRK00226.1-4"/>
    <property type="match status" value="1"/>
</dbReference>
<dbReference type="NCBIfam" id="NF001264">
    <property type="entry name" value="PRK00226.1-5"/>
    <property type="match status" value="1"/>
</dbReference>
<dbReference type="PANTHER" id="PTHR30437">
    <property type="entry name" value="TRANSCRIPTION ELONGATION FACTOR GREA"/>
    <property type="match status" value="1"/>
</dbReference>
<dbReference type="PANTHER" id="PTHR30437:SF4">
    <property type="entry name" value="TRANSCRIPTION ELONGATION FACTOR GREA"/>
    <property type="match status" value="1"/>
</dbReference>
<dbReference type="Pfam" id="PF01272">
    <property type="entry name" value="GreA_GreB"/>
    <property type="match status" value="1"/>
</dbReference>
<dbReference type="Pfam" id="PF03449">
    <property type="entry name" value="GreA_GreB_N"/>
    <property type="match status" value="1"/>
</dbReference>
<dbReference type="PIRSF" id="PIRSF006092">
    <property type="entry name" value="GreA_GreB"/>
    <property type="match status" value="1"/>
</dbReference>
<dbReference type="SUPFAM" id="SSF54534">
    <property type="entry name" value="FKBP-like"/>
    <property type="match status" value="1"/>
</dbReference>
<dbReference type="SUPFAM" id="SSF46557">
    <property type="entry name" value="GreA transcript cleavage protein, N-terminal domain"/>
    <property type="match status" value="1"/>
</dbReference>
<dbReference type="PROSITE" id="PS00829">
    <property type="entry name" value="GREAB_1"/>
    <property type="match status" value="1"/>
</dbReference>
<proteinExistence type="inferred from homology"/>
<name>GREA_FRATT</name>
<reference key="1">
    <citation type="journal article" date="2005" name="Nat. Genet.">
        <title>The complete genome sequence of Francisella tularensis, the causative agent of tularemia.</title>
        <authorList>
            <person name="Larsson P."/>
            <person name="Oyston P.C.F."/>
            <person name="Chain P."/>
            <person name="Chu M.C."/>
            <person name="Duffield M."/>
            <person name="Fuxelius H.-H."/>
            <person name="Garcia E."/>
            <person name="Haelltorp G."/>
            <person name="Johansson D."/>
            <person name="Isherwood K.E."/>
            <person name="Karp P.D."/>
            <person name="Larsson E."/>
            <person name="Liu Y."/>
            <person name="Michell S."/>
            <person name="Prior J."/>
            <person name="Prior R."/>
            <person name="Malfatti S."/>
            <person name="Sjoestedt A."/>
            <person name="Svensson K."/>
            <person name="Thompson N."/>
            <person name="Vergez L."/>
            <person name="Wagg J.K."/>
            <person name="Wren B.W."/>
            <person name="Lindler L.E."/>
            <person name="Andersson S.G.E."/>
            <person name="Forsman M."/>
            <person name="Titball R.W."/>
        </authorList>
    </citation>
    <scope>NUCLEOTIDE SEQUENCE [LARGE SCALE GENOMIC DNA]</scope>
    <source>
        <strain>SCHU S4 / Schu 4</strain>
    </source>
</reference>
<protein>
    <recommendedName>
        <fullName evidence="1">Transcription elongation factor GreA</fullName>
    </recommendedName>
    <alternativeName>
        <fullName evidence="1">Transcript cleavage factor GreA</fullName>
    </alternativeName>
</protein>
<organism>
    <name type="scientific">Francisella tularensis subsp. tularensis (strain SCHU S4 / Schu 4)</name>
    <dbReference type="NCBI Taxonomy" id="177416"/>
    <lineage>
        <taxon>Bacteria</taxon>
        <taxon>Pseudomonadati</taxon>
        <taxon>Pseudomonadota</taxon>
        <taxon>Gammaproteobacteria</taxon>
        <taxon>Thiotrichales</taxon>
        <taxon>Francisellaceae</taxon>
        <taxon>Francisella</taxon>
    </lineage>
</organism>
<comment type="function">
    <text evidence="1">Necessary for efficient RNA polymerase transcription elongation past template-encoded arresting sites. The arresting sites in DNA have the property of trapping a certain fraction of elongating RNA polymerases that pass through, resulting in locked ternary complexes. Cleavage of the nascent transcript by cleavage factors such as GreA or GreB allows the resumption of elongation from the new 3'terminus. GreA releases sequences of 2 to 3 nucleotides.</text>
</comment>
<comment type="similarity">
    <text evidence="1">Belongs to the GreA/GreB family.</text>
</comment>
<evidence type="ECO:0000255" key="1">
    <source>
        <dbReference type="HAMAP-Rule" id="MF_00105"/>
    </source>
</evidence>
<keyword id="KW-0238">DNA-binding</keyword>
<keyword id="KW-1185">Reference proteome</keyword>
<keyword id="KW-0804">Transcription</keyword>
<keyword id="KW-0805">Transcription regulation</keyword>